<reference key="1">
    <citation type="journal article" date="2004" name="Proc. Natl. Acad. Sci. U.S.A.">
        <title>Genome sequence of the deep-sea gamma-proteobacterium Idiomarina loihiensis reveals amino acid fermentation as a source of carbon and energy.</title>
        <authorList>
            <person name="Hou S."/>
            <person name="Saw J.H."/>
            <person name="Lee K.S."/>
            <person name="Freitas T.A."/>
            <person name="Belisle C."/>
            <person name="Kawarabayasi Y."/>
            <person name="Donachie S.P."/>
            <person name="Pikina A."/>
            <person name="Galperin M.Y."/>
            <person name="Koonin E.V."/>
            <person name="Makarova K.S."/>
            <person name="Omelchenko M.V."/>
            <person name="Sorokin A."/>
            <person name="Wolf Y.I."/>
            <person name="Li Q.X."/>
            <person name="Keum Y.S."/>
            <person name="Campbell S."/>
            <person name="Denery J."/>
            <person name="Aizawa S."/>
            <person name="Shibata S."/>
            <person name="Malahoff A."/>
            <person name="Alam M."/>
        </authorList>
    </citation>
    <scope>NUCLEOTIDE SEQUENCE [LARGE SCALE GENOMIC DNA]</scope>
    <source>
        <strain>ATCC BAA-735 / DSM 15497 / L2-TR</strain>
    </source>
</reference>
<accession>Q5QVT4</accession>
<protein>
    <recommendedName>
        <fullName evidence="1">Chaperonin GroEL</fullName>
        <ecNumber evidence="1">5.6.1.7</ecNumber>
    </recommendedName>
    <alternativeName>
        <fullName evidence="1">60 kDa chaperonin</fullName>
    </alternativeName>
    <alternativeName>
        <fullName evidence="1">Chaperonin-60</fullName>
        <shortName evidence="1">Cpn60</shortName>
    </alternativeName>
</protein>
<proteinExistence type="inferred from homology"/>
<feature type="chain" id="PRO_0000063392" description="Chaperonin GroEL">
    <location>
        <begin position="1"/>
        <end position="548"/>
    </location>
</feature>
<feature type="binding site" evidence="1">
    <location>
        <begin position="30"/>
        <end position="33"/>
    </location>
    <ligand>
        <name>ATP</name>
        <dbReference type="ChEBI" id="CHEBI:30616"/>
    </ligand>
</feature>
<feature type="binding site" evidence="1">
    <location>
        <position position="51"/>
    </location>
    <ligand>
        <name>ATP</name>
        <dbReference type="ChEBI" id="CHEBI:30616"/>
    </ligand>
</feature>
<feature type="binding site" evidence="1">
    <location>
        <begin position="87"/>
        <end position="91"/>
    </location>
    <ligand>
        <name>ATP</name>
        <dbReference type="ChEBI" id="CHEBI:30616"/>
    </ligand>
</feature>
<feature type="binding site" evidence="1">
    <location>
        <position position="415"/>
    </location>
    <ligand>
        <name>ATP</name>
        <dbReference type="ChEBI" id="CHEBI:30616"/>
    </ligand>
</feature>
<feature type="binding site" evidence="1">
    <location>
        <position position="495"/>
    </location>
    <ligand>
        <name>ATP</name>
        <dbReference type="ChEBI" id="CHEBI:30616"/>
    </ligand>
</feature>
<dbReference type="EC" id="5.6.1.7" evidence="1"/>
<dbReference type="EMBL" id="AE017340">
    <property type="protein sequence ID" value="AAV83112.1"/>
    <property type="molecule type" value="Genomic_DNA"/>
</dbReference>
<dbReference type="RefSeq" id="WP_011235506.1">
    <property type="nucleotide sequence ID" value="NC_006512.1"/>
</dbReference>
<dbReference type="SMR" id="Q5QVT4"/>
<dbReference type="STRING" id="283942.IL2280"/>
<dbReference type="GeneID" id="41337474"/>
<dbReference type="KEGG" id="ilo:IL2280"/>
<dbReference type="eggNOG" id="COG0459">
    <property type="taxonomic scope" value="Bacteria"/>
</dbReference>
<dbReference type="HOGENOM" id="CLU_016503_3_0_6"/>
<dbReference type="OrthoDB" id="9766614at2"/>
<dbReference type="Proteomes" id="UP000001171">
    <property type="component" value="Chromosome"/>
</dbReference>
<dbReference type="GO" id="GO:0005737">
    <property type="term" value="C:cytoplasm"/>
    <property type="evidence" value="ECO:0007669"/>
    <property type="project" value="UniProtKB-SubCell"/>
</dbReference>
<dbReference type="GO" id="GO:0005524">
    <property type="term" value="F:ATP binding"/>
    <property type="evidence" value="ECO:0007669"/>
    <property type="project" value="UniProtKB-UniRule"/>
</dbReference>
<dbReference type="GO" id="GO:0140662">
    <property type="term" value="F:ATP-dependent protein folding chaperone"/>
    <property type="evidence" value="ECO:0007669"/>
    <property type="project" value="InterPro"/>
</dbReference>
<dbReference type="GO" id="GO:0016853">
    <property type="term" value="F:isomerase activity"/>
    <property type="evidence" value="ECO:0007669"/>
    <property type="project" value="UniProtKB-KW"/>
</dbReference>
<dbReference type="GO" id="GO:0051082">
    <property type="term" value="F:unfolded protein binding"/>
    <property type="evidence" value="ECO:0007669"/>
    <property type="project" value="UniProtKB-UniRule"/>
</dbReference>
<dbReference type="GO" id="GO:0042026">
    <property type="term" value="P:protein refolding"/>
    <property type="evidence" value="ECO:0007669"/>
    <property type="project" value="UniProtKB-UniRule"/>
</dbReference>
<dbReference type="CDD" id="cd03344">
    <property type="entry name" value="GroEL"/>
    <property type="match status" value="1"/>
</dbReference>
<dbReference type="FunFam" id="1.10.560.10:FF:000001">
    <property type="entry name" value="60 kDa chaperonin"/>
    <property type="match status" value="1"/>
</dbReference>
<dbReference type="FunFam" id="3.50.7.10:FF:000001">
    <property type="entry name" value="60 kDa chaperonin"/>
    <property type="match status" value="1"/>
</dbReference>
<dbReference type="Gene3D" id="3.50.7.10">
    <property type="entry name" value="GroEL"/>
    <property type="match status" value="1"/>
</dbReference>
<dbReference type="Gene3D" id="1.10.560.10">
    <property type="entry name" value="GroEL-like equatorial domain"/>
    <property type="match status" value="1"/>
</dbReference>
<dbReference type="Gene3D" id="3.30.260.10">
    <property type="entry name" value="TCP-1-like chaperonin intermediate domain"/>
    <property type="match status" value="1"/>
</dbReference>
<dbReference type="HAMAP" id="MF_00600">
    <property type="entry name" value="CH60"/>
    <property type="match status" value="1"/>
</dbReference>
<dbReference type="InterPro" id="IPR018370">
    <property type="entry name" value="Chaperonin_Cpn60_CS"/>
</dbReference>
<dbReference type="InterPro" id="IPR001844">
    <property type="entry name" value="Cpn60/GroEL"/>
</dbReference>
<dbReference type="InterPro" id="IPR002423">
    <property type="entry name" value="Cpn60/GroEL/TCP-1"/>
</dbReference>
<dbReference type="InterPro" id="IPR027409">
    <property type="entry name" value="GroEL-like_apical_dom_sf"/>
</dbReference>
<dbReference type="InterPro" id="IPR027413">
    <property type="entry name" value="GROEL-like_equatorial_sf"/>
</dbReference>
<dbReference type="InterPro" id="IPR027410">
    <property type="entry name" value="TCP-1-like_intermed_sf"/>
</dbReference>
<dbReference type="NCBIfam" id="TIGR02348">
    <property type="entry name" value="GroEL"/>
    <property type="match status" value="1"/>
</dbReference>
<dbReference type="NCBIfam" id="NF000592">
    <property type="entry name" value="PRK00013.1"/>
    <property type="match status" value="1"/>
</dbReference>
<dbReference type="NCBIfam" id="NF009487">
    <property type="entry name" value="PRK12849.1"/>
    <property type="match status" value="1"/>
</dbReference>
<dbReference type="NCBIfam" id="NF009488">
    <property type="entry name" value="PRK12850.1"/>
    <property type="match status" value="1"/>
</dbReference>
<dbReference type="NCBIfam" id="NF009489">
    <property type="entry name" value="PRK12851.1"/>
    <property type="match status" value="1"/>
</dbReference>
<dbReference type="PANTHER" id="PTHR45633">
    <property type="entry name" value="60 KDA HEAT SHOCK PROTEIN, MITOCHONDRIAL"/>
    <property type="match status" value="1"/>
</dbReference>
<dbReference type="Pfam" id="PF00118">
    <property type="entry name" value="Cpn60_TCP1"/>
    <property type="match status" value="1"/>
</dbReference>
<dbReference type="PRINTS" id="PR00298">
    <property type="entry name" value="CHAPERONIN60"/>
</dbReference>
<dbReference type="SUPFAM" id="SSF52029">
    <property type="entry name" value="GroEL apical domain-like"/>
    <property type="match status" value="1"/>
</dbReference>
<dbReference type="SUPFAM" id="SSF48592">
    <property type="entry name" value="GroEL equatorial domain-like"/>
    <property type="match status" value="1"/>
</dbReference>
<dbReference type="SUPFAM" id="SSF54849">
    <property type="entry name" value="GroEL-intermediate domain like"/>
    <property type="match status" value="1"/>
</dbReference>
<dbReference type="PROSITE" id="PS00296">
    <property type="entry name" value="CHAPERONINS_CPN60"/>
    <property type="match status" value="1"/>
</dbReference>
<evidence type="ECO:0000255" key="1">
    <source>
        <dbReference type="HAMAP-Rule" id="MF_00600"/>
    </source>
</evidence>
<comment type="function">
    <text evidence="1">Together with its co-chaperonin GroES, plays an essential role in assisting protein folding. The GroEL-GroES system forms a nano-cage that allows encapsulation of the non-native substrate proteins and provides a physical environment optimized to promote and accelerate protein folding.</text>
</comment>
<comment type="catalytic activity">
    <reaction evidence="1">
        <text>ATP + H2O + a folded polypeptide = ADP + phosphate + an unfolded polypeptide.</text>
        <dbReference type="EC" id="5.6.1.7"/>
    </reaction>
</comment>
<comment type="subunit">
    <text evidence="1">Forms a cylinder of 14 subunits composed of two heptameric rings stacked back-to-back. Interacts with the co-chaperonin GroES.</text>
</comment>
<comment type="subcellular location">
    <subcellularLocation>
        <location evidence="1">Cytoplasm</location>
    </subcellularLocation>
</comment>
<comment type="similarity">
    <text evidence="1">Belongs to the chaperonin (HSP60) family.</text>
</comment>
<gene>
    <name evidence="1" type="primary">groEL</name>
    <name evidence="1" type="synonym">groL</name>
    <name type="ordered locus">IL2280</name>
</gene>
<keyword id="KW-0067">ATP-binding</keyword>
<keyword id="KW-0143">Chaperone</keyword>
<keyword id="KW-0963">Cytoplasm</keyword>
<keyword id="KW-0413">Isomerase</keyword>
<keyword id="KW-0547">Nucleotide-binding</keyword>
<keyword id="KW-1185">Reference proteome</keyword>
<sequence length="548" mass="57673">MAAKEVKFGNTARQKMLKGVNILADSVKVTLGPKGRNVVLDKSYGSPVITKDGVSVAKEIELEDKFENMGAQMVKEVASKANDEAGDGTTTATVLAQAIVNEGLKSVAAGMNPMDLKRGIDKAVIAAVEELKKISQPCADSKAIAQVATISANADHTIGEIIAQAMDKVGQEGVITVEEGQALTDELDVVEGMQFDRGYLSPYFINNQESGSVELDNPFILLIDKKISNIRELLPVLEGVSKAGKPLLIIAEDVEGEALATLVVNNMRGIVKVAAVKAPGFGDRRKAMLQDIAVLTGGTVVSEEIGMELEKTQLEDLGTAKRVVITKDNTTVVDGNGDDTAIDGRVNQIKQQMEDTTSDYDREKLQERLAKLAGGVAVIKVGAATEMEMKEKKARVEDALHATRAAVEEGVVPGGGVALVRAASKLAELRGDNEEQNVGIRLALRAMEAPLRQIAMNAGAEGSVVANNVRAGEGNYGYNAGNDTYGDMLEMGILDPTKVTRSALQFAASVGALMITTEAMIADIPQDDNAGGMPGGDMGGMGGMGGMM</sequence>
<organism>
    <name type="scientific">Idiomarina loihiensis (strain ATCC BAA-735 / DSM 15497 / L2-TR)</name>
    <dbReference type="NCBI Taxonomy" id="283942"/>
    <lineage>
        <taxon>Bacteria</taxon>
        <taxon>Pseudomonadati</taxon>
        <taxon>Pseudomonadota</taxon>
        <taxon>Gammaproteobacteria</taxon>
        <taxon>Alteromonadales</taxon>
        <taxon>Idiomarinaceae</taxon>
        <taxon>Idiomarina</taxon>
    </lineage>
</organism>
<name>CH60_IDILO</name>